<sequence length="316" mass="34916">MLKSNKVVLIGAGGVGSSFAYALTIDNSLVHELVIIDVNEDKAKGEVMDLNHGQMFLKKNINVLFGTYKDCVNADIVVITAGLNQKPGETRLDLVGKNSKIFKDIITNVVSSGFDGIFVIASNPVDIMTYVTMKYSKFPIHKVIGTGTILDTSRLRYFLSDRFNVNTQNIHSYVMGEHGDSSFVTWDETKIAMKPLSEYLSEGKITELELDEIHKKVVNAAYEVIKLKGATYYAIGLGIKNIVNAIIGDQNIILPISSYINGQYGGLIKDIYIGAPAIVCKEGVKEVLNFKISPKELEKFNNSANQLKSYIDKIEF</sequence>
<protein>
    <recommendedName>
        <fullName evidence="1">L-lactate dehydrogenase</fullName>
        <shortName evidence="1">L-LDH</shortName>
        <ecNumber evidence="1">1.1.1.27</ecNumber>
    </recommendedName>
</protein>
<gene>
    <name evidence="1" type="primary">ldh</name>
    <name type="ordered locus">BAPKO_0088</name>
    <name type="ordered locus">BafPKo_0085</name>
</gene>
<organism>
    <name type="scientific">Borreliella afzelii (strain PKo)</name>
    <name type="common">Borrelia afzelii</name>
    <dbReference type="NCBI Taxonomy" id="390236"/>
    <lineage>
        <taxon>Bacteria</taxon>
        <taxon>Pseudomonadati</taxon>
        <taxon>Spirochaetota</taxon>
        <taxon>Spirochaetia</taxon>
        <taxon>Spirochaetales</taxon>
        <taxon>Borreliaceae</taxon>
        <taxon>Borreliella</taxon>
    </lineage>
</organism>
<proteinExistence type="inferred from homology"/>
<feature type="chain" id="PRO_1000026497" description="L-lactate dehydrogenase">
    <location>
        <begin position="1"/>
        <end position="316"/>
    </location>
</feature>
<feature type="active site" description="Proton acceptor" evidence="1">
    <location>
        <position position="178"/>
    </location>
</feature>
<feature type="binding site" evidence="1">
    <location>
        <position position="15"/>
    </location>
    <ligand>
        <name>NAD(+)</name>
        <dbReference type="ChEBI" id="CHEBI:57540"/>
    </ligand>
</feature>
<feature type="binding site" evidence="1">
    <location>
        <position position="37"/>
    </location>
    <ligand>
        <name>NAD(+)</name>
        <dbReference type="ChEBI" id="CHEBI:57540"/>
    </ligand>
</feature>
<feature type="binding site" evidence="1">
    <location>
        <position position="42"/>
    </location>
    <ligand>
        <name>NAD(+)</name>
        <dbReference type="ChEBI" id="CHEBI:57540"/>
    </ligand>
</feature>
<feature type="binding site" evidence="1">
    <location>
        <position position="68"/>
    </location>
    <ligand>
        <name>NAD(+)</name>
        <dbReference type="ChEBI" id="CHEBI:57540"/>
    </ligand>
</feature>
<feature type="binding site" evidence="1">
    <location>
        <begin position="82"/>
        <end position="83"/>
    </location>
    <ligand>
        <name>NAD(+)</name>
        <dbReference type="ChEBI" id="CHEBI:57540"/>
    </ligand>
</feature>
<feature type="binding site" evidence="1">
    <location>
        <position position="85"/>
    </location>
    <ligand>
        <name>substrate</name>
    </ligand>
</feature>
<feature type="binding site" evidence="1">
    <location>
        <position position="91"/>
    </location>
    <ligand>
        <name>substrate</name>
    </ligand>
</feature>
<feature type="binding site" evidence="1">
    <location>
        <begin position="121"/>
        <end position="123"/>
    </location>
    <ligand>
        <name>NAD(+)</name>
        <dbReference type="ChEBI" id="CHEBI:57540"/>
    </ligand>
</feature>
<feature type="binding site" evidence="1">
    <location>
        <begin position="123"/>
        <end position="126"/>
    </location>
    <ligand>
        <name>substrate</name>
    </ligand>
</feature>
<feature type="binding site" evidence="1">
    <location>
        <position position="146"/>
    </location>
    <ligand>
        <name>NAD(+)</name>
        <dbReference type="ChEBI" id="CHEBI:57540"/>
    </ligand>
</feature>
<feature type="binding site" evidence="1">
    <location>
        <begin position="151"/>
        <end position="154"/>
    </location>
    <ligand>
        <name>substrate</name>
    </ligand>
</feature>
<feature type="binding site" evidence="1">
    <location>
        <position position="156"/>
    </location>
    <ligand>
        <name>beta-D-fructose 1,6-bisphosphate</name>
        <dbReference type="ChEBI" id="CHEBI:32966"/>
        <note>allosteric activator</note>
    </ligand>
</feature>
<feature type="binding site" evidence="1">
    <location>
        <position position="171"/>
    </location>
    <ligand>
        <name>beta-D-fructose 1,6-bisphosphate</name>
        <dbReference type="ChEBI" id="CHEBI:32966"/>
        <note>allosteric activator</note>
    </ligand>
</feature>
<feature type="binding site" evidence="1">
    <location>
        <position position="231"/>
    </location>
    <ligand>
        <name>substrate</name>
    </ligand>
</feature>
<feature type="modified residue" description="Phosphotyrosine" evidence="1">
    <location>
        <position position="222"/>
    </location>
</feature>
<reference key="1">
    <citation type="journal article" date="2006" name="BMC Genomics">
        <title>Comparative genome analysis: selection pressure on the Borrelia vls cassettes is essential for infectivity.</title>
        <authorList>
            <person name="Gloeckner G."/>
            <person name="Schulte-Spechtel U."/>
            <person name="Schilhabel M."/>
            <person name="Felder M."/>
            <person name="Suehnel J."/>
            <person name="Wilske B."/>
            <person name="Platzer M."/>
        </authorList>
    </citation>
    <scope>NUCLEOTIDE SEQUENCE [LARGE SCALE GENOMIC DNA]</scope>
    <source>
        <strain>PKo</strain>
    </source>
</reference>
<reference key="2">
    <citation type="journal article" date="2011" name="J. Bacteriol.">
        <title>Whole-genome sequences of two Borrelia afzelii and two Borrelia garinii Lyme disease agent isolates.</title>
        <authorList>
            <person name="Casjens S.R."/>
            <person name="Mongodin E.F."/>
            <person name="Qiu W.G."/>
            <person name="Dunn J.J."/>
            <person name="Luft B.J."/>
            <person name="Fraser-Liggett C.M."/>
            <person name="Schutzer S.E."/>
        </authorList>
    </citation>
    <scope>NUCLEOTIDE SEQUENCE [LARGE SCALE GENOMIC DNA]</scope>
    <source>
        <strain>PKo</strain>
    </source>
</reference>
<keyword id="KW-0021">Allosteric enzyme</keyword>
<keyword id="KW-0963">Cytoplasm</keyword>
<keyword id="KW-0520">NAD</keyword>
<keyword id="KW-0560">Oxidoreductase</keyword>
<keyword id="KW-0597">Phosphoprotein</keyword>
<name>LDH_BORAP</name>
<comment type="function">
    <text evidence="1">Catalyzes the conversion of lactate to pyruvate.</text>
</comment>
<comment type="catalytic activity">
    <reaction evidence="1">
        <text>(S)-lactate + NAD(+) = pyruvate + NADH + H(+)</text>
        <dbReference type="Rhea" id="RHEA:23444"/>
        <dbReference type="ChEBI" id="CHEBI:15361"/>
        <dbReference type="ChEBI" id="CHEBI:15378"/>
        <dbReference type="ChEBI" id="CHEBI:16651"/>
        <dbReference type="ChEBI" id="CHEBI:57540"/>
        <dbReference type="ChEBI" id="CHEBI:57945"/>
        <dbReference type="EC" id="1.1.1.27"/>
    </reaction>
</comment>
<comment type="activity regulation">
    <text evidence="1">Allosterically activated by fructose 1,6-bisphosphate (FBP).</text>
</comment>
<comment type="pathway">
    <text evidence="1">Fermentation; pyruvate fermentation to lactate; (S)-lactate from pyruvate: step 1/1.</text>
</comment>
<comment type="subunit">
    <text evidence="1">Homotetramer.</text>
</comment>
<comment type="subcellular location">
    <subcellularLocation>
        <location evidence="1">Cytoplasm</location>
    </subcellularLocation>
</comment>
<comment type="similarity">
    <text evidence="1">Belongs to the LDH/MDH superfamily. LDH family.</text>
</comment>
<evidence type="ECO:0000255" key="1">
    <source>
        <dbReference type="HAMAP-Rule" id="MF_00488"/>
    </source>
</evidence>
<accession>Q0SP77</accession>
<accession>G0IQT2</accession>
<dbReference type="EC" id="1.1.1.27" evidence="1"/>
<dbReference type="EMBL" id="CP000395">
    <property type="protein sequence ID" value="ABH01351.1"/>
    <property type="molecule type" value="Genomic_DNA"/>
</dbReference>
<dbReference type="EMBL" id="CP002933">
    <property type="protein sequence ID" value="AEL69318.1"/>
    <property type="molecule type" value="Genomic_DNA"/>
</dbReference>
<dbReference type="RefSeq" id="WP_011600826.1">
    <property type="nucleotide sequence ID" value="NZ_CP160066.1"/>
</dbReference>
<dbReference type="SMR" id="Q0SP77"/>
<dbReference type="STRING" id="29518.BLA32_03855"/>
<dbReference type="KEGG" id="baf:BAPKO_0088"/>
<dbReference type="KEGG" id="bafz:BafPKo_0085"/>
<dbReference type="PATRIC" id="fig|390236.22.peg.84"/>
<dbReference type="eggNOG" id="COG0039">
    <property type="taxonomic scope" value="Bacteria"/>
</dbReference>
<dbReference type="HOGENOM" id="CLU_045401_1_1_12"/>
<dbReference type="OrthoDB" id="9802969at2"/>
<dbReference type="UniPathway" id="UPA00554">
    <property type="reaction ID" value="UER00611"/>
</dbReference>
<dbReference type="Proteomes" id="UP000005216">
    <property type="component" value="Chromosome"/>
</dbReference>
<dbReference type="GO" id="GO:0005737">
    <property type="term" value="C:cytoplasm"/>
    <property type="evidence" value="ECO:0007669"/>
    <property type="project" value="UniProtKB-SubCell"/>
</dbReference>
<dbReference type="GO" id="GO:0004459">
    <property type="term" value="F:L-lactate dehydrogenase activity"/>
    <property type="evidence" value="ECO:0007669"/>
    <property type="project" value="UniProtKB-UniRule"/>
</dbReference>
<dbReference type="GO" id="GO:0006096">
    <property type="term" value="P:glycolytic process"/>
    <property type="evidence" value="ECO:0007669"/>
    <property type="project" value="UniProtKB-UniRule"/>
</dbReference>
<dbReference type="GO" id="GO:0006089">
    <property type="term" value="P:lactate metabolic process"/>
    <property type="evidence" value="ECO:0007669"/>
    <property type="project" value="TreeGrafter"/>
</dbReference>
<dbReference type="CDD" id="cd05291">
    <property type="entry name" value="HicDH_like"/>
    <property type="match status" value="1"/>
</dbReference>
<dbReference type="FunFam" id="3.40.50.720:FF:000018">
    <property type="entry name" value="Malate dehydrogenase"/>
    <property type="match status" value="1"/>
</dbReference>
<dbReference type="Gene3D" id="3.90.110.10">
    <property type="entry name" value="Lactate dehydrogenase/glycoside hydrolase, family 4, C-terminal"/>
    <property type="match status" value="1"/>
</dbReference>
<dbReference type="Gene3D" id="3.40.50.720">
    <property type="entry name" value="NAD(P)-binding Rossmann-like Domain"/>
    <property type="match status" value="1"/>
</dbReference>
<dbReference type="HAMAP" id="MF_00488">
    <property type="entry name" value="Lactate_dehydrog"/>
    <property type="match status" value="1"/>
</dbReference>
<dbReference type="InterPro" id="IPR001557">
    <property type="entry name" value="L-lactate/malate_DH"/>
</dbReference>
<dbReference type="InterPro" id="IPR011304">
    <property type="entry name" value="L-lactate_DH"/>
</dbReference>
<dbReference type="InterPro" id="IPR018177">
    <property type="entry name" value="L-lactate_DH_AS"/>
</dbReference>
<dbReference type="InterPro" id="IPR022383">
    <property type="entry name" value="Lactate/malate_DH_C"/>
</dbReference>
<dbReference type="InterPro" id="IPR001236">
    <property type="entry name" value="Lactate/malate_DH_N"/>
</dbReference>
<dbReference type="InterPro" id="IPR015955">
    <property type="entry name" value="Lactate_DH/Glyco_Ohase_4_C"/>
</dbReference>
<dbReference type="InterPro" id="IPR036291">
    <property type="entry name" value="NAD(P)-bd_dom_sf"/>
</dbReference>
<dbReference type="NCBIfam" id="TIGR01771">
    <property type="entry name" value="L-LDH-NAD"/>
    <property type="match status" value="1"/>
</dbReference>
<dbReference type="NCBIfam" id="NF000824">
    <property type="entry name" value="PRK00066.1"/>
    <property type="match status" value="1"/>
</dbReference>
<dbReference type="PANTHER" id="PTHR43128">
    <property type="entry name" value="L-2-HYDROXYCARBOXYLATE DEHYDROGENASE (NAD(P)(+))"/>
    <property type="match status" value="1"/>
</dbReference>
<dbReference type="PANTHER" id="PTHR43128:SF16">
    <property type="entry name" value="L-LACTATE DEHYDROGENASE"/>
    <property type="match status" value="1"/>
</dbReference>
<dbReference type="Pfam" id="PF02866">
    <property type="entry name" value="Ldh_1_C"/>
    <property type="match status" value="1"/>
</dbReference>
<dbReference type="Pfam" id="PF00056">
    <property type="entry name" value="Ldh_1_N"/>
    <property type="match status" value="1"/>
</dbReference>
<dbReference type="PIRSF" id="PIRSF000102">
    <property type="entry name" value="Lac_mal_DH"/>
    <property type="match status" value="1"/>
</dbReference>
<dbReference type="PRINTS" id="PR00086">
    <property type="entry name" value="LLDHDRGNASE"/>
</dbReference>
<dbReference type="SUPFAM" id="SSF56327">
    <property type="entry name" value="LDH C-terminal domain-like"/>
    <property type="match status" value="1"/>
</dbReference>
<dbReference type="SUPFAM" id="SSF51735">
    <property type="entry name" value="NAD(P)-binding Rossmann-fold domains"/>
    <property type="match status" value="1"/>
</dbReference>
<dbReference type="PROSITE" id="PS00064">
    <property type="entry name" value="L_LDH"/>
    <property type="match status" value="1"/>
</dbReference>